<reference key="1">
    <citation type="journal article" date="1993" name="Biochem. J.">
        <title>Cloning and analysis of the esterase genes conferring insecticide resistance in the peach-potato aphid, Myzus persicae (Sulzer).</title>
        <authorList>
            <person name="Field L.M."/>
            <person name="Williamson M.S."/>
            <person name="Moores G.D."/>
            <person name="Devonshire A.L."/>
        </authorList>
    </citation>
    <scope>NUCLEOTIDE SEQUENCE [MRNA]</scope>
    <scope>PROTEIN SEQUENCE OF 24-63</scope>
    <source>
        <strain>R3 / Isolate 794J</strain>
    </source>
</reference>
<feature type="signal peptide" evidence="4">
    <location>
        <begin position="1"/>
        <end position="23"/>
    </location>
</feature>
<feature type="chain" id="PRO_0000008566" description="Esterase E4">
    <location>
        <begin position="24"/>
        <end position="552"/>
    </location>
</feature>
<feature type="active site" description="Acyl-ester intermediate" evidence="3">
    <location>
        <position position="214"/>
    </location>
</feature>
<feature type="active site" description="Charge relay system" evidence="1">
    <location>
        <position position="339"/>
    </location>
</feature>
<feature type="active site" description="Charge relay system" evidence="1">
    <location>
        <position position="463"/>
    </location>
</feature>
<feature type="glycosylation site" description="N-linked (GlcNAc...) asparagine" evidence="2">
    <location>
        <position position="81"/>
    </location>
</feature>
<feature type="glycosylation site" description="N-linked (GlcNAc...) asparagine" evidence="2">
    <location>
        <position position="269"/>
    </location>
</feature>
<feature type="glycosylation site" description="N-linked (GlcNAc...) asparagine" evidence="2">
    <location>
        <position position="371"/>
    </location>
</feature>
<feature type="glycosylation site" description="N-linked (GlcNAc...) asparagine" evidence="2">
    <location>
        <position position="404"/>
    </location>
</feature>
<feature type="glycosylation site" description="N-linked (GlcNAc...) asparagine" evidence="2">
    <location>
        <position position="443"/>
    </location>
</feature>
<feature type="disulfide bond" evidence="1">
    <location>
        <begin position="89"/>
        <end position="106"/>
    </location>
</feature>
<feature type="disulfide bond" evidence="1">
    <location>
        <begin position="266"/>
        <end position="277"/>
    </location>
</feature>
<name>ESTE_MYZPE</name>
<accession>P35501</accession>
<comment type="function">
    <text>Overproduction of nonspecific esterases is a common mechanism of resistance to organophosphate insecticides.</text>
</comment>
<comment type="catalytic activity">
    <reaction evidence="3">
        <text>a carboxylic ester + H2O = an alcohol + a carboxylate + H(+)</text>
        <dbReference type="Rhea" id="RHEA:21164"/>
        <dbReference type="ChEBI" id="CHEBI:15377"/>
        <dbReference type="ChEBI" id="CHEBI:15378"/>
        <dbReference type="ChEBI" id="CHEBI:29067"/>
        <dbReference type="ChEBI" id="CHEBI:30879"/>
        <dbReference type="ChEBI" id="CHEBI:33308"/>
        <dbReference type="EC" id="3.1.1.1"/>
    </reaction>
</comment>
<comment type="miscellaneous">
    <text>This esterase confers insecticide resistance.</text>
</comment>
<comment type="similarity">
    <text evidence="5">Belongs to the type-B carboxylesterase/lipase family.</text>
</comment>
<proteinExistence type="evidence at protein level"/>
<sequence length="552" mass="61348">MKNTCGILLNLFLFIGCFLTCSASNTPKVQVHSGEIAGGFEYTYNGRKIYSFLGIPYASPPVQNNRFKEPQPVQPWLGVWNATVPGSACLGIEFGSGSKIIGQEDCLFLNVYTPKLPQENSAGDLMNVIVHIHGGGYYFGEGILYGPHYLLDNNDFVYVSINYRLGVLGFASTGDGVLTGNNGLKDQVAALKWIQQNIVAFGGDPNSVTITGMSAGASSVHNHLISPMSKGLFNRAIIQSGSAFCHWSTAENVAQKTKYIANLMGCPTNNSVEIVECLRSRPAKAIAKSYLNFMPWRNFPFTPFGPTVEVAGYEKFLPDIPEKLVPHDIPVLISIAQDEGLIFSTFLGLENGFNELNNNWNEHLPHILDYNYTISNENLRFKTAQDIKEFYFGDKPISKETKSNLSKMISDRSFGYGTSKAAQHIAAKNTAPVYFYEFGYSGNYSYVAFFDPKSYSRGSSPTHGDETSYVLKMDGFYVYDNEEDRKMIKTMVNIWATFIKSGVPDTENSEIWLPVSKNLADPFRFTKITQQQTFEAREQSTTGIMNFGVAYH</sequence>
<dbReference type="EC" id="3.1.1.1"/>
<dbReference type="EMBL" id="X74554">
    <property type="protein sequence ID" value="CAA52648.1"/>
    <property type="molecule type" value="mRNA"/>
</dbReference>
<dbReference type="PIR" id="S36786">
    <property type="entry name" value="S36786"/>
</dbReference>
<dbReference type="SMR" id="P35501"/>
<dbReference type="ESTHER" id="myzpe-este4">
    <property type="family name" value="Carb_B_Arthropoda"/>
</dbReference>
<dbReference type="MEROPS" id="S09.980"/>
<dbReference type="OrthoDB" id="6846267at2759"/>
<dbReference type="GO" id="GO:0106435">
    <property type="term" value="F:carboxylesterase activity"/>
    <property type="evidence" value="ECO:0007669"/>
    <property type="project" value="UniProtKB-EC"/>
</dbReference>
<dbReference type="CDD" id="cd00312">
    <property type="entry name" value="Esterase_lipase"/>
    <property type="match status" value="1"/>
</dbReference>
<dbReference type="Gene3D" id="3.40.50.1820">
    <property type="entry name" value="alpha/beta hydrolase"/>
    <property type="match status" value="1"/>
</dbReference>
<dbReference type="InterPro" id="IPR029058">
    <property type="entry name" value="AB_hydrolase_fold"/>
</dbReference>
<dbReference type="InterPro" id="IPR002018">
    <property type="entry name" value="CarbesteraseB"/>
</dbReference>
<dbReference type="InterPro" id="IPR019826">
    <property type="entry name" value="Carboxylesterase_B_AS"/>
</dbReference>
<dbReference type="InterPro" id="IPR019819">
    <property type="entry name" value="Carboxylesterase_B_CS"/>
</dbReference>
<dbReference type="InterPro" id="IPR050309">
    <property type="entry name" value="Type-B_Carboxylest/Lipase"/>
</dbReference>
<dbReference type="PANTHER" id="PTHR11559">
    <property type="entry name" value="CARBOXYLESTERASE"/>
    <property type="match status" value="1"/>
</dbReference>
<dbReference type="Pfam" id="PF00135">
    <property type="entry name" value="COesterase"/>
    <property type="match status" value="1"/>
</dbReference>
<dbReference type="SUPFAM" id="SSF53474">
    <property type="entry name" value="alpha/beta-Hydrolases"/>
    <property type="match status" value="1"/>
</dbReference>
<dbReference type="PROSITE" id="PS00122">
    <property type="entry name" value="CARBOXYLESTERASE_B_1"/>
    <property type="match status" value="1"/>
</dbReference>
<dbReference type="PROSITE" id="PS00941">
    <property type="entry name" value="CARBOXYLESTERASE_B_2"/>
    <property type="match status" value="1"/>
</dbReference>
<protein>
    <recommendedName>
        <fullName>Esterase E4</fullName>
        <ecNumber>3.1.1.1</ecNumber>
    </recommendedName>
    <alternativeName>
        <fullName>Carboxylic-ester hydrolase</fullName>
    </alternativeName>
</protein>
<organism>
    <name type="scientific">Myzus persicae</name>
    <name type="common">Green peach aphid</name>
    <name type="synonym">Aphis persicae</name>
    <dbReference type="NCBI Taxonomy" id="13164"/>
    <lineage>
        <taxon>Eukaryota</taxon>
        <taxon>Metazoa</taxon>
        <taxon>Ecdysozoa</taxon>
        <taxon>Arthropoda</taxon>
        <taxon>Hexapoda</taxon>
        <taxon>Insecta</taxon>
        <taxon>Pterygota</taxon>
        <taxon>Neoptera</taxon>
        <taxon>Paraneoptera</taxon>
        <taxon>Hemiptera</taxon>
        <taxon>Sternorrhyncha</taxon>
        <taxon>Aphidomorpha</taxon>
        <taxon>Aphidoidea</taxon>
        <taxon>Aphididae</taxon>
        <taxon>Macrosiphini</taxon>
        <taxon>Myzus</taxon>
    </lineage>
</organism>
<evidence type="ECO:0000250" key="1"/>
<evidence type="ECO:0000255" key="2"/>
<evidence type="ECO:0000255" key="3">
    <source>
        <dbReference type="PROSITE-ProRule" id="PRU10039"/>
    </source>
</evidence>
<evidence type="ECO:0000269" key="4">
    <source>
    </source>
</evidence>
<evidence type="ECO:0000305" key="5"/>
<keyword id="KW-0903">Direct protein sequencing</keyword>
<keyword id="KW-1015">Disulfide bond</keyword>
<keyword id="KW-0325">Glycoprotein</keyword>
<keyword id="KW-0378">Hydrolase</keyword>
<keyword id="KW-0719">Serine esterase</keyword>
<keyword id="KW-0732">Signal</keyword>